<sequence>MKVSYHGHSVVKIETNGKVILIDPFLTGNPKTDLKAEDVKVDAILLSHGHGDHVGDTVELAKKNNAVVVAPFELATFLSWQGVNTHPMHIGGSHEFDFGKVKFTQAFHGSSYIDEENKTITYTGMPAGILFTAEEKTLYHAGDTALFSDMKLIGELNNIDVAFLPIGDNFTMGPEDAVLAAKWVQAKTVVPMHYNTFPVIEQDPYQFVEKLQNCTGKVLEAGESITL</sequence>
<comment type="similarity">
    <text evidence="1">Belongs to the UPF0173 family.</text>
</comment>
<accession>B7JRY7</accession>
<organism>
    <name type="scientific">Bacillus cereus (strain AH820)</name>
    <dbReference type="NCBI Taxonomy" id="405535"/>
    <lineage>
        <taxon>Bacteria</taxon>
        <taxon>Bacillati</taxon>
        <taxon>Bacillota</taxon>
        <taxon>Bacilli</taxon>
        <taxon>Bacillales</taxon>
        <taxon>Bacillaceae</taxon>
        <taxon>Bacillus</taxon>
        <taxon>Bacillus cereus group</taxon>
    </lineage>
</organism>
<name>Y4729_BACC0</name>
<feature type="chain" id="PRO_1000197808" description="UPF0173 metal-dependent hydrolase BCAH820_4729">
    <location>
        <begin position="1"/>
        <end position="227"/>
    </location>
</feature>
<gene>
    <name type="ordered locus">BCAH820_4729</name>
</gene>
<evidence type="ECO:0000255" key="1">
    <source>
        <dbReference type="HAMAP-Rule" id="MF_00457"/>
    </source>
</evidence>
<protein>
    <recommendedName>
        <fullName evidence="1">UPF0173 metal-dependent hydrolase BCAH820_4729</fullName>
    </recommendedName>
</protein>
<proteinExistence type="inferred from homology"/>
<dbReference type="EMBL" id="CP001283">
    <property type="protein sequence ID" value="ACK91742.1"/>
    <property type="molecule type" value="Genomic_DNA"/>
</dbReference>
<dbReference type="RefSeq" id="WP_000868940.1">
    <property type="nucleotide sequence ID" value="NC_011773.1"/>
</dbReference>
<dbReference type="SMR" id="B7JRY7"/>
<dbReference type="KEGG" id="bcu:BCAH820_4729"/>
<dbReference type="HOGENOM" id="CLU_070010_4_1_9"/>
<dbReference type="Proteomes" id="UP000001363">
    <property type="component" value="Chromosome"/>
</dbReference>
<dbReference type="GO" id="GO:0016787">
    <property type="term" value="F:hydrolase activity"/>
    <property type="evidence" value="ECO:0007669"/>
    <property type="project" value="UniProtKB-UniRule"/>
</dbReference>
<dbReference type="Gene3D" id="3.60.15.10">
    <property type="entry name" value="Ribonuclease Z/Hydroxyacylglutathione hydrolase-like"/>
    <property type="match status" value="1"/>
</dbReference>
<dbReference type="HAMAP" id="MF_00457">
    <property type="entry name" value="UPF0173"/>
    <property type="match status" value="1"/>
</dbReference>
<dbReference type="InterPro" id="IPR001279">
    <property type="entry name" value="Metallo-B-lactamas"/>
</dbReference>
<dbReference type="InterPro" id="IPR036866">
    <property type="entry name" value="RibonucZ/Hydroxyglut_hydro"/>
</dbReference>
<dbReference type="InterPro" id="IPR022877">
    <property type="entry name" value="UPF0173"/>
</dbReference>
<dbReference type="InterPro" id="IPR050114">
    <property type="entry name" value="UPF0173_UPF0282_UlaG_hydrolase"/>
</dbReference>
<dbReference type="NCBIfam" id="NF001911">
    <property type="entry name" value="PRK00685.1"/>
    <property type="match status" value="1"/>
</dbReference>
<dbReference type="PANTHER" id="PTHR43546:SF3">
    <property type="entry name" value="UPF0173 METAL-DEPENDENT HYDROLASE MJ1163"/>
    <property type="match status" value="1"/>
</dbReference>
<dbReference type="PANTHER" id="PTHR43546">
    <property type="entry name" value="UPF0173 METAL-DEPENDENT HYDROLASE MJ1163-RELATED"/>
    <property type="match status" value="1"/>
</dbReference>
<dbReference type="Pfam" id="PF12706">
    <property type="entry name" value="Lactamase_B_2"/>
    <property type="match status" value="1"/>
</dbReference>
<dbReference type="SMART" id="SM00849">
    <property type="entry name" value="Lactamase_B"/>
    <property type="match status" value="1"/>
</dbReference>
<dbReference type="SUPFAM" id="SSF56281">
    <property type="entry name" value="Metallo-hydrolase/oxidoreductase"/>
    <property type="match status" value="1"/>
</dbReference>
<reference key="1">
    <citation type="submission" date="2008-10" db="EMBL/GenBank/DDBJ databases">
        <title>Genome sequence of Bacillus cereus AH820.</title>
        <authorList>
            <person name="Dodson R.J."/>
            <person name="Durkin A.S."/>
            <person name="Rosovitz M.J."/>
            <person name="Rasko D.A."/>
            <person name="Hoffmaster A."/>
            <person name="Ravel J."/>
            <person name="Sutton G."/>
        </authorList>
    </citation>
    <scope>NUCLEOTIDE SEQUENCE [LARGE SCALE GENOMIC DNA]</scope>
    <source>
        <strain>AH820</strain>
    </source>
</reference>
<keyword id="KW-0378">Hydrolase</keyword>